<accession>Q9UV68</accession>
<reference key="1">
    <citation type="journal article" date="1999" name="Can. J. Microbiol.">
        <title>Characterization of a Neocallimastix patriciarum xylanase gene and its product.</title>
        <authorList>
            <person name="Liu J.H."/>
            <person name="Selinger B.L."/>
            <person name="Tsai C.F."/>
            <person name="Cheng K.J."/>
        </authorList>
    </citation>
    <scope>NUCLEOTIDE SEQUENCE [MRNA]</scope>
    <scope>FUNCTION</scope>
    <scope>CATALYTIC ACTIVITY</scope>
    <scope>DOMAIN</scope>
    <source>
        <strain>27</strain>
    </source>
</reference>
<dbReference type="EC" id="3.2.1.8"/>
<dbReference type="EMBL" id="AF123252">
    <property type="protein sequence ID" value="AAF14365.1"/>
    <property type="molecule type" value="Genomic_DNA"/>
</dbReference>
<dbReference type="PDB" id="3WP4">
    <property type="method" value="X-ray"/>
    <property type="resolution" value="1.27 A"/>
    <property type="chains" value="A=20-244"/>
</dbReference>
<dbReference type="PDB" id="3WP5">
    <property type="method" value="X-ray"/>
    <property type="resolution" value="1.32 A"/>
    <property type="chains" value="A=20-244"/>
</dbReference>
<dbReference type="PDB" id="3WP6">
    <property type="method" value="X-ray"/>
    <property type="resolution" value="1.43 A"/>
    <property type="chains" value="A=20-244"/>
</dbReference>
<dbReference type="PDBsum" id="3WP4"/>
<dbReference type="PDBsum" id="3WP5"/>
<dbReference type="PDBsum" id="3WP6"/>
<dbReference type="SMR" id="Q9UV68"/>
<dbReference type="CAZy" id="CBM1">
    <property type="family name" value="Carbohydrate-Binding Module Family 1"/>
</dbReference>
<dbReference type="CAZy" id="GH11">
    <property type="family name" value="Glycoside Hydrolase Family 11"/>
</dbReference>
<dbReference type="GlyCosmos" id="Q9UV68">
    <property type="glycosylation" value="5 sites, No reported glycans"/>
</dbReference>
<dbReference type="BRENDA" id="3.2.1.8">
    <property type="organism ID" value="6834"/>
</dbReference>
<dbReference type="UniPathway" id="UPA00114"/>
<dbReference type="EvolutionaryTrace" id="Q9UV68"/>
<dbReference type="GO" id="GO:0005576">
    <property type="term" value="C:extracellular region"/>
    <property type="evidence" value="ECO:0007669"/>
    <property type="project" value="UniProtKB-SubCell"/>
</dbReference>
<dbReference type="GO" id="GO:0030248">
    <property type="term" value="F:cellulose binding"/>
    <property type="evidence" value="ECO:0007669"/>
    <property type="project" value="InterPro"/>
</dbReference>
<dbReference type="GO" id="GO:0031176">
    <property type="term" value="F:endo-1,4-beta-xylanase activity"/>
    <property type="evidence" value="ECO:0007669"/>
    <property type="project" value="UniProtKB-EC"/>
</dbReference>
<dbReference type="GO" id="GO:0045493">
    <property type="term" value="P:xylan catabolic process"/>
    <property type="evidence" value="ECO:0007669"/>
    <property type="project" value="UniProtKB-UniPathway"/>
</dbReference>
<dbReference type="Gene3D" id="2.60.120.180">
    <property type="match status" value="1"/>
</dbReference>
<dbReference type="InterPro" id="IPR035971">
    <property type="entry name" value="CBD_sf"/>
</dbReference>
<dbReference type="InterPro" id="IPR000254">
    <property type="entry name" value="Cellulose-bd_dom_fun"/>
</dbReference>
<dbReference type="InterPro" id="IPR013320">
    <property type="entry name" value="ConA-like_dom_sf"/>
</dbReference>
<dbReference type="InterPro" id="IPR013319">
    <property type="entry name" value="GH11/12"/>
</dbReference>
<dbReference type="InterPro" id="IPR018208">
    <property type="entry name" value="GH11_AS_1"/>
</dbReference>
<dbReference type="InterPro" id="IPR033123">
    <property type="entry name" value="GH11_dom"/>
</dbReference>
<dbReference type="InterPro" id="IPR001137">
    <property type="entry name" value="Glyco_hydro_11"/>
</dbReference>
<dbReference type="PANTHER" id="PTHR46828">
    <property type="entry name" value="ENDO-1,4-BETA-XYLANASE A-RELATED"/>
    <property type="match status" value="1"/>
</dbReference>
<dbReference type="PANTHER" id="PTHR46828:SF2">
    <property type="entry name" value="ENDO-1,4-BETA-XYLANASE A-RELATED"/>
    <property type="match status" value="1"/>
</dbReference>
<dbReference type="Pfam" id="PF00734">
    <property type="entry name" value="CBM_1"/>
    <property type="match status" value="1"/>
</dbReference>
<dbReference type="Pfam" id="PF00457">
    <property type="entry name" value="Glyco_hydro_11"/>
    <property type="match status" value="1"/>
</dbReference>
<dbReference type="PRINTS" id="PR00911">
    <property type="entry name" value="GLHYDRLASE11"/>
</dbReference>
<dbReference type="SMART" id="SM00236">
    <property type="entry name" value="fCBD"/>
    <property type="match status" value="1"/>
</dbReference>
<dbReference type="SUPFAM" id="SSF57180">
    <property type="entry name" value="Cellulose-binding domain"/>
    <property type="match status" value="1"/>
</dbReference>
<dbReference type="SUPFAM" id="SSF49899">
    <property type="entry name" value="Concanavalin A-like lectins/glucanases"/>
    <property type="match status" value="1"/>
</dbReference>
<dbReference type="PROSITE" id="PS00562">
    <property type="entry name" value="CBM1_1"/>
    <property type="match status" value="1"/>
</dbReference>
<dbReference type="PROSITE" id="PS51164">
    <property type="entry name" value="CBM1_2"/>
    <property type="match status" value="1"/>
</dbReference>
<dbReference type="PROSITE" id="PS00776">
    <property type="entry name" value="GH11_1"/>
    <property type="match status" value="1"/>
</dbReference>
<dbReference type="PROSITE" id="PS51761">
    <property type="entry name" value="GH11_3"/>
    <property type="match status" value="1"/>
</dbReference>
<evidence type="ECO:0000250" key="1"/>
<evidence type="ECO:0000255" key="2"/>
<evidence type="ECO:0000255" key="3">
    <source>
        <dbReference type="PROSITE-ProRule" id="PRU00597"/>
    </source>
</evidence>
<evidence type="ECO:0000255" key="4">
    <source>
        <dbReference type="PROSITE-ProRule" id="PRU01097"/>
    </source>
</evidence>
<evidence type="ECO:0000255" key="5">
    <source>
        <dbReference type="PROSITE-ProRule" id="PRU10062"/>
    </source>
</evidence>
<evidence type="ECO:0000256" key="6">
    <source>
        <dbReference type="SAM" id="MobiDB-lite"/>
    </source>
</evidence>
<evidence type="ECO:0000269" key="7">
    <source>
    </source>
</evidence>
<evidence type="ECO:0000305" key="8"/>
<evidence type="ECO:0007829" key="9">
    <source>
        <dbReference type="PDB" id="3WP4"/>
    </source>
</evidence>
<sequence>MKFLQIIPVLLSLTSTTLAQSFCSSASHSGQSVKETGNKVGTIGGVGYELWADSGNNSATFYSDGSFSCTFQNAGDYLCRSGLSFDSTKTPSQIGRMKADFKLVKQNISNVGYSYVGVYGWTRSPLVEYYIVDNWLSPSPPGDWVGNKKHGSFTIDGAQYTVYENTRTGPSIDGNTTFKQYFSIRQQARDCGTIDISAHFDQWEKLGMTMGKLHEAKVLGEAGNGNGGVSGTADFPYAKVYIGDGNGGGASPAPAGGAPAGGAPAGNDQPQGPQGQQPPQGQQPPQGQQPPQGQQPPQGQQPPQGNDQQGQQPPQGQQPPQGNDQHQGQHPPQPQGPQGGNPGGSDFNNWSQGGSPWGGNQGGSPWGGNQGGNPWGGNQGGSPWGGNQGGSPWGQGNQGGNPWGGNQGGSPWGGNQGGNPWGGNQWGAPQNAAAPQSAAAPQNASDGGNCASLWGQCGGQGYNGPSCCSEGSCKPINEYFHQCQK</sequence>
<feature type="signal peptide" evidence="2">
    <location>
        <begin position="1"/>
        <end position="19"/>
    </location>
</feature>
<feature type="chain" id="PRO_0000429667" description="Endo-1,4-beta-xylanase C">
    <location>
        <begin position="20"/>
        <end position="485"/>
    </location>
</feature>
<feature type="domain" description="GH11" evidence="4">
    <location>
        <begin position="34"/>
        <end position="234"/>
    </location>
</feature>
<feature type="repeat" description="1-1">
    <location>
        <begin position="275"/>
        <end position="280"/>
    </location>
</feature>
<feature type="repeat" description="1-2">
    <location>
        <begin position="281"/>
        <end position="286"/>
    </location>
</feature>
<feature type="repeat" description="1-3">
    <location>
        <begin position="287"/>
        <end position="292"/>
    </location>
</feature>
<feature type="repeat" description="1-4">
    <location>
        <begin position="293"/>
        <end position="298"/>
    </location>
</feature>
<feature type="repeat" description="1-5">
    <location>
        <begin position="299"/>
        <end position="304"/>
    </location>
</feature>
<feature type="repeat" description="1-6">
    <location>
        <begin position="310"/>
        <end position="315"/>
    </location>
</feature>
<feature type="repeat" description="1-7">
    <location>
        <begin position="316"/>
        <end position="321"/>
    </location>
</feature>
<feature type="repeat" description="2-1">
    <location>
        <begin position="353"/>
        <end position="361"/>
    </location>
</feature>
<feature type="repeat" description="2-2">
    <location>
        <begin position="362"/>
        <end position="370"/>
    </location>
</feature>
<feature type="repeat" description="2-3">
    <location>
        <begin position="371"/>
        <end position="379"/>
    </location>
</feature>
<feature type="repeat" description="2-4">
    <location>
        <begin position="380"/>
        <end position="388"/>
    </location>
</feature>
<feature type="repeat" description="2-5">
    <location>
        <begin position="389"/>
        <end position="397"/>
    </location>
</feature>
<feature type="repeat" description="2-6">
    <location>
        <begin position="399"/>
        <end position="407"/>
    </location>
</feature>
<feature type="repeat" description="2-7">
    <location>
        <begin position="408"/>
        <end position="416"/>
    </location>
</feature>
<feature type="repeat" description="2-8">
    <location>
        <begin position="417"/>
        <end position="425"/>
    </location>
</feature>
<feature type="domain" description="CBM1" evidence="3">
    <location>
        <begin position="449"/>
        <end position="484"/>
    </location>
</feature>
<feature type="region of interest" description="Disordered" evidence="6">
    <location>
        <begin position="250"/>
        <end position="450"/>
    </location>
</feature>
<feature type="region of interest" description="7 X 6 AA tandem repeats of G-Q-Q-P-P-Q">
    <location>
        <begin position="275"/>
        <end position="321"/>
    </location>
</feature>
<feature type="region of interest" description="8 X 9 AA tandem repeats of G-G-[SN]-P-W-G-G-N-Q">
    <location>
        <begin position="353"/>
        <end position="425"/>
    </location>
</feature>
<feature type="compositionally biased region" description="Low complexity" evidence="6">
    <location>
        <begin position="265"/>
        <end position="330"/>
    </location>
</feature>
<feature type="compositionally biased region" description="Low complexity" evidence="6">
    <location>
        <begin position="344"/>
        <end position="354"/>
    </location>
</feature>
<feature type="compositionally biased region" description="Gly residues" evidence="6">
    <location>
        <begin position="355"/>
        <end position="425"/>
    </location>
</feature>
<feature type="compositionally biased region" description="Low complexity" evidence="6">
    <location>
        <begin position="426"/>
        <end position="445"/>
    </location>
</feature>
<feature type="active site" description="Nucleophile" evidence="5">
    <location>
        <position position="128"/>
    </location>
</feature>
<feature type="active site" description="Proton donor" evidence="1">
    <location>
        <position position="221"/>
    </location>
</feature>
<feature type="glycosylation site" description="N-linked (GlcNAc...) asparagine" evidence="2">
    <location>
        <position position="56"/>
    </location>
</feature>
<feature type="glycosylation site" description="N-linked (GlcNAc...) asparagine" evidence="2">
    <location>
        <position position="107"/>
    </location>
</feature>
<feature type="glycosylation site" description="N-linked (GlcNAc...) asparagine" evidence="2">
    <location>
        <position position="175"/>
    </location>
</feature>
<feature type="glycosylation site" description="N-linked (GlcNAc...) asparagine" evidence="2">
    <location>
        <position position="349"/>
    </location>
</feature>
<feature type="glycosylation site" description="N-linked (GlcNAc...) asparagine" evidence="2">
    <location>
        <position position="443"/>
    </location>
</feature>
<feature type="helix" evidence="9">
    <location>
        <begin position="22"/>
        <end position="25"/>
    </location>
</feature>
<feature type="strand" evidence="9">
    <location>
        <begin position="32"/>
        <end position="35"/>
    </location>
</feature>
<feature type="strand" evidence="9">
    <location>
        <begin position="37"/>
        <end position="43"/>
    </location>
</feature>
<feature type="strand" evidence="9">
    <location>
        <begin position="46"/>
        <end position="56"/>
    </location>
</feature>
<feature type="strand" evidence="9">
    <location>
        <begin position="58"/>
        <end position="62"/>
    </location>
</feature>
<feature type="strand" evidence="9">
    <location>
        <begin position="67"/>
        <end position="84"/>
    </location>
</feature>
<feature type="helix" evidence="9">
    <location>
        <begin position="91"/>
        <end position="94"/>
    </location>
</feature>
<feature type="strand" evidence="9">
    <location>
        <begin position="97"/>
        <end position="110"/>
    </location>
</feature>
<feature type="strand" evidence="9">
    <location>
        <begin position="113"/>
        <end position="123"/>
    </location>
</feature>
<feature type="turn" evidence="9">
    <location>
        <begin position="124"/>
        <end position="126"/>
    </location>
</feature>
<feature type="strand" evidence="9">
    <location>
        <begin position="127"/>
        <end position="134"/>
    </location>
</feature>
<feature type="strand" evidence="9">
    <location>
        <begin position="136"/>
        <end position="139"/>
    </location>
</feature>
<feature type="helix" evidence="9">
    <location>
        <begin position="143"/>
        <end position="145"/>
    </location>
</feature>
<feature type="strand" evidence="9">
    <location>
        <begin position="147"/>
        <end position="155"/>
    </location>
</feature>
<feature type="strand" evidence="9">
    <location>
        <begin position="158"/>
        <end position="169"/>
    </location>
</feature>
<feature type="strand" evidence="9">
    <location>
        <begin position="174"/>
        <end position="187"/>
    </location>
</feature>
<feature type="strand" evidence="9">
    <location>
        <begin position="190"/>
        <end position="195"/>
    </location>
</feature>
<feature type="helix" evidence="9">
    <location>
        <begin position="196"/>
        <end position="205"/>
    </location>
</feature>
<feature type="strand" evidence="9">
    <location>
        <begin position="212"/>
        <end position="223"/>
    </location>
</feature>
<feature type="strand" evidence="9">
    <location>
        <begin position="225"/>
        <end position="227"/>
    </location>
</feature>
<feature type="strand" evidence="9">
    <location>
        <begin position="229"/>
        <end position="242"/>
    </location>
</feature>
<keyword id="KW-0002">3D-structure</keyword>
<keyword id="KW-0119">Carbohydrate metabolism</keyword>
<keyword id="KW-0325">Glycoprotein</keyword>
<keyword id="KW-0326">Glycosidase</keyword>
<keyword id="KW-0378">Hydrolase</keyword>
<keyword id="KW-0624">Polysaccharide degradation</keyword>
<keyword id="KW-0677">Repeat</keyword>
<keyword id="KW-0964">Secreted</keyword>
<keyword id="KW-0732">Signal</keyword>
<keyword id="KW-0858">Xylan degradation</keyword>
<organism>
    <name type="scientific">Neocallimastix patriciarum</name>
    <name type="common">Rumen fungus</name>
    <dbReference type="NCBI Taxonomy" id="4758"/>
    <lineage>
        <taxon>Eukaryota</taxon>
        <taxon>Fungi</taxon>
        <taxon>Fungi incertae sedis</taxon>
        <taxon>Chytridiomycota</taxon>
        <taxon>Chytridiomycota incertae sedis</taxon>
        <taxon>Neocallimastigomycetes</taxon>
        <taxon>Neocallimastigales</taxon>
        <taxon>Neocallimastigaceae</taxon>
        <taxon>Neocallimastix</taxon>
    </lineage>
</organism>
<proteinExistence type="evidence at protein level"/>
<comment type="function">
    <text evidence="7">Endo-1,4-beta-xylanase involved in the hydrolysis of xylan, a major structural heterogeneous polysaccharide found in plant biomass representing the second most abundant polysaccharide in the biosphere, after cellulose.</text>
</comment>
<comment type="catalytic activity">
    <reaction evidence="7">
        <text>Endohydrolysis of (1-&gt;4)-beta-D-xylosidic linkages in xylans.</text>
        <dbReference type="EC" id="3.2.1.8"/>
    </reaction>
</comment>
<comment type="pathway">
    <text>Glycan degradation; xylan degradation.</text>
</comment>
<comment type="subcellular location">
    <subcellularLocation>
        <location>Secreted</location>
    </subcellularLocation>
</comment>
<comment type="domain">
    <text evidence="7">The CBM1 domain is essential for optimal xylanase activity.</text>
</comment>
<comment type="similarity">
    <text evidence="8">Belongs to the glycosyl hydrolase 11 (cellulase G) family.</text>
</comment>
<name>XYNC_NEOPA</name>
<gene>
    <name type="primary">xynC</name>
</gene>
<protein>
    <recommendedName>
        <fullName>Endo-1,4-beta-xylanase C</fullName>
        <shortName>Xylanase C</shortName>
        <ecNumber>3.2.1.8</ecNumber>
    </recommendedName>
    <alternativeName>
        <fullName>1,4-beta-D-xylan xylanohydrolase C</fullName>
    </alternativeName>
</protein>